<organism>
    <name type="scientific">Thermosynechococcus vestitus (strain NIES-2133 / IAM M-273 / BP-1)</name>
    <dbReference type="NCBI Taxonomy" id="197221"/>
    <lineage>
        <taxon>Bacteria</taxon>
        <taxon>Bacillati</taxon>
        <taxon>Cyanobacteriota</taxon>
        <taxon>Cyanophyceae</taxon>
        <taxon>Acaryochloridales</taxon>
        <taxon>Thermosynechococcaceae</taxon>
        <taxon>Thermosynechococcus</taxon>
    </lineage>
</organism>
<comment type="function">
    <text evidence="1">Component of the dark-operative protochlorophyllide reductase (DPOR) that uses Mg-ATP and reduced ferredoxin to reduce ring D of protochlorophyllide (Pchlide) to form chlorophyllide a (Chlide). This reaction is light-independent. The L component serves as a unique electron donor to the NB-component of the complex, and binds Mg-ATP.</text>
</comment>
<comment type="catalytic activity">
    <reaction evidence="1">
        <text>chlorophyllide a + oxidized 2[4Fe-4S]-[ferredoxin] + 2 ADP + 2 phosphate = protochlorophyllide a + reduced 2[4Fe-4S]-[ferredoxin] + 2 ATP + 2 H2O</text>
        <dbReference type="Rhea" id="RHEA:28202"/>
        <dbReference type="Rhea" id="RHEA-COMP:10002"/>
        <dbReference type="Rhea" id="RHEA-COMP:10004"/>
        <dbReference type="ChEBI" id="CHEBI:15377"/>
        <dbReference type="ChEBI" id="CHEBI:30616"/>
        <dbReference type="ChEBI" id="CHEBI:33722"/>
        <dbReference type="ChEBI" id="CHEBI:33723"/>
        <dbReference type="ChEBI" id="CHEBI:43474"/>
        <dbReference type="ChEBI" id="CHEBI:83348"/>
        <dbReference type="ChEBI" id="CHEBI:83350"/>
        <dbReference type="ChEBI" id="CHEBI:456216"/>
        <dbReference type="EC" id="1.3.7.7"/>
    </reaction>
</comment>
<comment type="cofactor">
    <cofactor evidence="1">
        <name>[4Fe-4S] cluster</name>
        <dbReference type="ChEBI" id="CHEBI:49883"/>
    </cofactor>
    <text evidence="1">Binds 1 [4Fe-4S] cluster per dimer.</text>
</comment>
<comment type="pathway">
    <text evidence="1">Porphyrin-containing compound metabolism; chlorophyll biosynthesis (light-independent).</text>
</comment>
<comment type="subunit">
    <text evidence="1">Homodimer. Protochlorophyllide reductase is composed of three subunits; ChlL, ChlN and ChlB.</text>
</comment>
<comment type="similarity">
    <text evidence="1">Belongs to the NifH/BchL/ChlL family.</text>
</comment>
<comment type="sequence caution" evidence="2">
    <conflict type="erroneous initiation">
        <sequence resource="EMBL-CDS" id="BAC09899"/>
    </conflict>
</comment>
<feature type="chain" id="PRO_0000139571" description="Light-independent protochlorophyllide reductase iron-sulfur ATP-binding protein">
    <location>
        <begin position="1"/>
        <end position="281"/>
    </location>
</feature>
<feature type="binding site" evidence="1">
    <location>
        <begin position="10"/>
        <end position="15"/>
    </location>
    <ligand>
        <name>ATP</name>
        <dbReference type="ChEBI" id="CHEBI:30616"/>
    </ligand>
</feature>
<feature type="binding site" evidence="1">
    <location>
        <position position="14"/>
    </location>
    <ligand>
        <name>Mg(2+)</name>
        <dbReference type="ChEBI" id="CHEBI:18420"/>
    </ligand>
</feature>
<feature type="binding site" evidence="1">
    <location>
        <position position="39"/>
    </location>
    <ligand>
        <name>ATP</name>
        <dbReference type="ChEBI" id="CHEBI:30616"/>
    </ligand>
</feature>
<feature type="binding site" evidence="1">
    <location>
        <position position="95"/>
    </location>
    <ligand>
        <name>[4Fe-4S] cluster</name>
        <dbReference type="ChEBI" id="CHEBI:49883"/>
        <note>ligand shared between dimeric partners</note>
    </ligand>
</feature>
<feature type="binding site" evidence="1">
    <location>
        <position position="129"/>
    </location>
    <ligand>
        <name>[4Fe-4S] cluster</name>
        <dbReference type="ChEBI" id="CHEBI:49883"/>
        <note>ligand shared between dimeric partners</note>
    </ligand>
</feature>
<feature type="binding site" evidence="1">
    <location>
        <begin position="180"/>
        <end position="181"/>
    </location>
    <ligand>
        <name>ATP</name>
        <dbReference type="ChEBI" id="CHEBI:30616"/>
    </ligand>
</feature>
<reference key="1">
    <citation type="journal article" date="2002" name="DNA Res.">
        <title>Complete genome structure of the thermophilic cyanobacterium Thermosynechococcus elongatus BP-1.</title>
        <authorList>
            <person name="Nakamura Y."/>
            <person name="Kaneko T."/>
            <person name="Sato S."/>
            <person name="Ikeuchi M."/>
            <person name="Katoh H."/>
            <person name="Sasamoto S."/>
            <person name="Watanabe A."/>
            <person name="Iriguchi M."/>
            <person name="Kawashima K."/>
            <person name="Kimura T."/>
            <person name="Kishida Y."/>
            <person name="Kiyokawa C."/>
            <person name="Kohara M."/>
            <person name="Matsumoto M."/>
            <person name="Matsuno A."/>
            <person name="Nakazaki N."/>
            <person name="Shimpo S."/>
            <person name="Sugimoto M."/>
            <person name="Takeuchi C."/>
            <person name="Yamada M."/>
            <person name="Tabata S."/>
        </authorList>
    </citation>
    <scope>NUCLEOTIDE SEQUENCE [LARGE SCALE GENOMIC DNA]</scope>
    <source>
        <strain>NIES-2133 / IAM M-273 / BP-1</strain>
    </source>
</reference>
<accession>Q8DGH0</accession>
<evidence type="ECO:0000255" key="1">
    <source>
        <dbReference type="HAMAP-Rule" id="MF_00355"/>
    </source>
</evidence>
<evidence type="ECO:0000305" key="2"/>
<name>CHLL_THEVB</name>
<dbReference type="EC" id="1.3.7.7" evidence="1"/>
<dbReference type="EMBL" id="BA000039">
    <property type="protein sequence ID" value="BAC09899.1"/>
    <property type="status" value="ALT_INIT"/>
    <property type="molecule type" value="Genomic_DNA"/>
</dbReference>
<dbReference type="RefSeq" id="NP_683137.1">
    <property type="nucleotide sequence ID" value="NC_004113.1"/>
</dbReference>
<dbReference type="RefSeq" id="WP_164921031.1">
    <property type="nucleotide sequence ID" value="NC_004113.1"/>
</dbReference>
<dbReference type="SMR" id="Q8DGH0"/>
<dbReference type="STRING" id="197221.gene:10748966"/>
<dbReference type="EnsemblBacteria" id="BAC09899">
    <property type="protein sequence ID" value="BAC09899"/>
    <property type="gene ID" value="BAC09899"/>
</dbReference>
<dbReference type="KEGG" id="tel:tll2347"/>
<dbReference type="PATRIC" id="fig|197221.4.peg.2460"/>
<dbReference type="eggNOG" id="COG1348">
    <property type="taxonomic scope" value="Bacteria"/>
</dbReference>
<dbReference type="UniPathway" id="UPA00670"/>
<dbReference type="Proteomes" id="UP000000440">
    <property type="component" value="Chromosome"/>
</dbReference>
<dbReference type="GO" id="GO:0051539">
    <property type="term" value="F:4 iron, 4 sulfur cluster binding"/>
    <property type="evidence" value="ECO:0007669"/>
    <property type="project" value="UniProtKB-UniRule"/>
</dbReference>
<dbReference type="GO" id="GO:0005524">
    <property type="term" value="F:ATP binding"/>
    <property type="evidence" value="ECO:0007669"/>
    <property type="project" value="UniProtKB-UniRule"/>
</dbReference>
<dbReference type="GO" id="GO:0046872">
    <property type="term" value="F:metal ion binding"/>
    <property type="evidence" value="ECO:0007669"/>
    <property type="project" value="UniProtKB-KW"/>
</dbReference>
<dbReference type="GO" id="GO:0016730">
    <property type="term" value="F:oxidoreductase activity, acting on iron-sulfur proteins as donors"/>
    <property type="evidence" value="ECO:0007669"/>
    <property type="project" value="InterPro"/>
</dbReference>
<dbReference type="GO" id="GO:0016636">
    <property type="term" value="F:oxidoreductase activity, acting on the CH-CH group of donors, iron-sulfur protein as acceptor"/>
    <property type="evidence" value="ECO:0007669"/>
    <property type="project" value="UniProtKB-UniRule"/>
</dbReference>
<dbReference type="GO" id="GO:0036068">
    <property type="term" value="P:light-independent chlorophyll biosynthetic process"/>
    <property type="evidence" value="ECO:0007669"/>
    <property type="project" value="UniProtKB-UniRule"/>
</dbReference>
<dbReference type="GO" id="GO:0019685">
    <property type="term" value="P:photosynthesis, dark reaction"/>
    <property type="evidence" value="ECO:0007669"/>
    <property type="project" value="InterPro"/>
</dbReference>
<dbReference type="CDD" id="cd02032">
    <property type="entry name" value="Bchl-like"/>
    <property type="match status" value="1"/>
</dbReference>
<dbReference type="Gene3D" id="3.40.50.300">
    <property type="entry name" value="P-loop containing nucleotide triphosphate hydrolases"/>
    <property type="match status" value="1"/>
</dbReference>
<dbReference type="HAMAP" id="MF_00355">
    <property type="entry name" value="ChlL_BchL"/>
    <property type="match status" value="1"/>
</dbReference>
<dbReference type="InterPro" id="IPR030655">
    <property type="entry name" value="NifH/chlL_CS"/>
</dbReference>
<dbReference type="InterPro" id="IPR000392">
    <property type="entry name" value="NifH/frxC"/>
</dbReference>
<dbReference type="InterPro" id="IPR027417">
    <property type="entry name" value="P-loop_NTPase"/>
</dbReference>
<dbReference type="InterPro" id="IPR005971">
    <property type="entry name" value="Protochlorophyllide_ATP-bd"/>
</dbReference>
<dbReference type="NCBIfam" id="TIGR01281">
    <property type="entry name" value="DPOR_bchL"/>
    <property type="match status" value="1"/>
</dbReference>
<dbReference type="PANTHER" id="PTHR42864">
    <property type="entry name" value="LIGHT-INDEPENDENT PROTOCHLOROPHYLLIDE REDUCTASE IRON-SULFUR ATP-BINDING PROTEIN"/>
    <property type="match status" value="1"/>
</dbReference>
<dbReference type="PANTHER" id="PTHR42864:SF2">
    <property type="entry name" value="LIGHT-INDEPENDENT PROTOCHLOROPHYLLIDE REDUCTASE IRON-SULFUR ATP-BINDING PROTEIN"/>
    <property type="match status" value="1"/>
</dbReference>
<dbReference type="Pfam" id="PF00142">
    <property type="entry name" value="Fer4_NifH"/>
    <property type="match status" value="1"/>
</dbReference>
<dbReference type="PIRSF" id="PIRSF000363">
    <property type="entry name" value="Nitrogenase_iron"/>
    <property type="match status" value="1"/>
</dbReference>
<dbReference type="PRINTS" id="PR00091">
    <property type="entry name" value="NITROGNASEII"/>
</dbReference>
<dbReference type="SUPFAM" id="SSF52540">
    <property type="entry name" value="P-loop containing nucleoside triphosphate hydrolases"/>
    <property type="match status" value="1"/>
</dbReference>
<dbReference type="PROSITE" id="PS00746">
    <property type="entry name" value="NIFH_FRXC_1"/>
    <property type="match status" value="1"/>
</dbReference>
<dbReference type="PROSITE" id="PS00692">
    <property type="entry name" value="NIFH_FRXC_2"/>
    <property type="match status" value="1"/>
</dbReference>
<dbReference type="PROSITE" id="PS51026">
    <property type="entry name" value="NIFH_FRXC_3"/>
    <property type="match status" value="1"/>
</dbReference>
<keyword id="KW-0004">4Fe-4S</keyword>
<keyword id="KW-0067">ATP-binding</keyword>
<keyword id="KW-0149">Chlorophyll biosynthesis</keyword>
<keyword id="KW-0408">Iron</keyword>
<keyword id="KW-0411">Iron-sulfur</keyword>
<keyword id="KW-0460">Magnesium</keyword>
<keyword id="KW-0479">Metal-binding</keyword>
<keyword id="KW-0547">Nucleotide-binding</keyword>
<keyword id="KW-0560">Oxidoreductase</keyword>
<keyword id="KW-0602">Photosynthesis</keyword>
<keyword id="KW-1185">Reference proteome</keyword>
<protein>
    <recommendedName>
        <fullName evidence="1">Light-independent protochlorophyllide reductase iron-sulfur ATP-binding protein</fullName>
        <shortName evidence="1">DPOR subunit L</shortName>
        <shortName evidence="1">LI-POR subunit L</shortName>
        <ecNumber evidence="1">1.3.7.7</ecNumber>
    </recommendedName>
</protein>
<sequence>MKLAVYGKGGIGKSTTSCNISVALARRGKKVLQIGCDPKHDSTFTLTGFLIPTIIDTLQAKDYHYEDVWPEDVIYKGYGGVDCVEAGGPPAGAGCGGYVVGETVKLLKELNAFDEYDVILFDVLGDVVCGGFAAPLNYADYCLIVTDNGFDALFAANRIAASVREKARTHPLRLAGLIGNRTNKRDLIEKYVEAVPMPILEVLPLIEDIRVSRVKGKTLFEMAESDPSLNDVCDYYLNIADQILARPEGVVPKDVPDRDLFALLSDFYLNPQGSERSLAAV</sequence>
<proteinExistence type="inferred from homology"/>
<gene>
    <name evidence="1" type="primary">chlL</name>
    <name type="ordered locus">tll2347</name>
</gene>